<evidence type="ECO:0000255" key="1">
    <source>
        <dbReference type="HAMAP-Rule" id="MF_00277"/>
    </source>
</evidence>
<evidence type="ECO:0000255" key="2">
    <source>
        <dbReference type="PROSITE-ProRule" id="PRU01175"/>
    </source>
</evidence>
<feature type="chain" id="PRO_1000114755" description="Bifunctional uridylyltransferase/uridylyl-removing enzyme">
    <location>
        <begin position="1"/>
        <end position="890"/>
    </location>
</feature>
<feature type="domain" description="HD" evidence="2">
    <location>
        <begin position="468"/>
        <end position="590"/>
    </location>
</feature>
<feature type="domain" description="ACT 1" evidence="1">
    <location>
        <begin position="709"/>
        <end position="789"/>
    </location>
</feature>
<feature type="domain" description="ACT 2" evidence="1">
    <location>
        <begin position="816"/>
        <end position="890"/>
    </location>
</feature>
<feature type="region of interest" description="Uridylyltransferase">
    <location>
        <begin position="1"/>
        <end position="349"/>
    </location>
</feature>
<feature type="region of interest" description="Uridylyl-removing">
    <location>
        <begin position="350"/>
        <end position="708"/>
    </location>
</feature>
<keyword id="KW-0378">Hydrolase</keyword>
<keyword id="KW-0460">Magnesium</keyword>
<keyword id="KW-0511">Multifunctional enzyme</keyword>
<keyword id="KW-0548">Nucleotidyltransferase</keyword>
<keyword id="KW-0677">Repeat</keyword>
<keyword id="KW-0808">Transferase</keyword>
<accession>B6HZE1</accession>
<organism>
    <name type="scientific">Escherichia coli (strain SE11)</name>
    <dbReference type="NCBI Taxonomy" id="409438"/>
    <lineage>
        <taxon>Bacteria</taxon>
        <taxon>Pseudomonadati</taxon>
        <taxon>Pseudomonadota</taxon>
        <taxon>Gammaproteobacteria</taxon>
        <taxon>Enterobacterales</taxon>
        <taxon>Enterobacteriaceae</taxon>
        <taxon>Escherichia</taxon>
    </lineage>
</organism>
<gene>
    <name evidence="1" type="primary">glnD</name>
    <name type="ordered locus">ECSE_0166</name>
</gene>
<proteinExistence type="inferred from homology"/>
<sequence length="890" mass="102396">MNTLPEQYANTALPTLPGQPQNPCVWPRDELTVGGIKAHIDTFQRWLGDAFDNGISAEQLIEARTEFIDQLLQRLWIEAGFSQIADLALVAVGGYGRGELHPLSDIDLLILSRKKLPDDQAQKVGELLTLLWDVKLEVGHSVRTLEECMLEGLSDLTVATNLIESRLLIGDVALFLELQKHIFSEGFWPSDKFYAAKVEEQNQRHQRYHGTSYNLEPDIKSSPGGLRDIHTLQWVARRHFGATSLDEMVGFGFLTSAERAELNECLHILWRIRFALHLVVSRYDNRLLFDRQLSVAQRLNYSGEGNEPVERMMKDYFRVTRRVSELNQMLLQLFDEAILALPADEKPRPIDDEFQLRGTLIDLRDETLFMRQPEAILRMFYTMVRNSAITGIYSTTLRQLRHARRHLQQPLCNIPEARKLFLSILRHPGAVRRGLLPMHRHSVLGAYMPQWSHIVGQMQFDLFHAYTVDEHTIRVMLKLESFASEETRQRHPLCVDVWPRLPSTELIFIAALFHDIAKGRGGDHSILGAQDVVHFAELHGLNSRETQLVAWLVRQHLLMSVTAQRRDIQDPEVIKQFAEEVQTENRLRYLVCLTVADICATNETLWNSWKQSLLRELYFATEKQLRRGMQNTPDMRERVRHHQLQALALLRMDNIDEEALHQIWSRCRANYFVRHSPNQLAWHARHLLQHDLSKPLVLLSPQATRGGTEIFIWSPDRPYLFAAVCAELDRRNLSVHDAQIFTTRDGMAMDTFIVLEPDGSPLSADRHEVIRFGLEQVLTQSSWQPPQPRRQPAKLRHFTVETEVTFLPTHTDRKSFLELIALDQPGLLARVGKIFADLGISLHGARITTIGERVEDLFIIATADRRALNNELQQEVHQRLTEALNPNDKG</sequence>
<protein>
    <recommendedName>
        <fullName evidence="1">Bifunctional uridylyltransferase/uridylyl-removing enzyme</fullName>
        <shortName evidence="1">UTase/UR</shortName>
    </recommendedName>
    <alternativeName>
        <fullName evidence="1">Bifunctional [protein-PII] modification enzyme</fullName>
    </alternativeName>
    <alternativeName>
        <fullName evidence="1">Bifunctional nitrogen sensor protein</fullName>
    </alternativeName>
    <domain>
        <recommendedName>
            <fullName evidence="1">[Protein-PII] uridylyltransferase</fullName>
            <shortName evidence="1">PII uridylyltransferase</shortName>
            <shortName evidence="1">UTase</shortName>
            <ecNumber evidence="1">2.7.7.59</ecNumber>
        </recommendedName>
    </domain>
    <domain>
        <recommendedName>
            <fullName evidence="1">[Protein-PII]-UMP uridylyl-removing enzyme</fullName>
            <shortName evidence="1">UR</shortName>
            <ecNumber evidence="1">3.1.4.-</ecNumber>
        </recommendedName>
    </domain>
</protein>
<comment type="function">
    <text evidence="1">Modifies, by uridylylation and deuridylylation, the PII regulatory proteins (GlnB and homologs), in response to the nitrogen status of the cell that GlnD senses through the glutamine level. Under low glutamine levels, catalyzes the conversion of the PII proteins and UTP to PII-UMP and PPi, while under higher glutamine levels, GlnD hydrolyzes PII-UMP to PII and UMP (deuridylylation). Thus, controls uridylylation state and activity of the PII proteins, and plays an important role in the regulation of nitrogen assimilation and metabolism.</text>
</comment>
<comment type="catalytic activity">
    <reaction evidence="1">
        <text>[protein-PII]-L-tyrosine + UTP = [protein-PII]-uridylyl-L-tyrosine + diphosphate</text>
        <dbReference type="Rhea" id="RHEA:13673"/>
        <dbReference type="Rhea" id="RHEA-COMP:12147"/>
        <dbReference type="Rhea" id="RHEA-COMP:12148"/>
        <dbReference type="ChEBI" id="CHEBI:33019"/>
        <dbReference type="ChEBI" id="CHEBI:46398"/>
        <dbReference type="ChEBI" id="CHEBI:46858"/>
        <dbReference type="ChEBI" id="CHEBI:90602"/>
        <dbReference type="EC" id="2.7.7.59"/>
    </reaction>
</comment>
<comment type="catalytic activity">
    <reaction evidence="1">
        <text>[protein-PII]-uridylyl-L-tyrosine + H2O = [protein-PII]-L-tyrosine + UMP + H(+)</text>
        <dbReference type="Rhea" id="RHEA:48600"/>
        <dbReference type="Rhea" id="RHEA-COMP:12147"/>
        <dbReference type="Rhea" id="RHEA-COMP:12148"/>
        <dbReference type="ChEBI" id="CHEBI:15377"/>
        <dbReference type="ChEBI" id="CHEBI:15378"/>
        <dbReference type="ChEBI" id="CHEBI:46858"/>
        <dbReference type="ChEBI" id="CHEBI:57865"/>
        <dbReference type="ChEBI" id="CHEBI:90602"/>
    </reaction>
</comment>
<comment type="cofactor">
    <cofactor evidence="1">
        <name>Mg(2+)</name>
        <dbReference type="ChEBI" id="CHEBI:18420"/>
    </cofactor>
</comment>
<comment type="activity regulation">
    <text evidence="1">Uridylyltransferase (UTase) activity is inhibited by glutamine, while glutamine activates uridylyl-removing (UR) activity.</text>
</comment>
<comment type="domain">
    <text evidence="1">Has four distinct domains: an N-terminal nucleotidyltransferase (NT) domain responsible for UTase activity, a central HD domain that encodes UR activity, and two C-terminal ACT domains that seem to have a role in glutamine sensing.</text>
</comment>
<comment type="similarity">
    <text evidence="1">Belongs to the GlnD family.</text>
</comment>
<name>GLND_ECOSE</name>
<reference key="1">
    <citation type="journal article" date="2008" name="DNA Res.">
        <title>Complete genome sequence and comparative analysis of the wild-type commensal Escherichia coli strain SE11 isolated from a healthy adult.</title>
        <authorList>
            <person name="Oshima K."/>
            <person name="Toh H."/>
            <person name="Ogura Y."/>
            <person name="Sasamoto H."/>
            <person name="Morita H."/>
            <person name="Park S.-H."/>
            <person name="Ooka T."/>
            <person name="Iyoda S."/>
            <person name="Taylor T.D."/>
            <person name="Hayashi T."/>
            <person name="Itoh K."/>
            <person name="Hattori M."/>
        </authorList>
    </citation>
    <scope>NUCLEOTIDE SEQUENCE [LARGE SCALE GENOMIC DNA]</scope>
    <source>
        <strain>SE11</strain>
    </source>
</reference>
<dbReference type="EC" id="2.7.7.59" evidence="1"/>
<dbReference type="EC" id="3.1.4.-" evidence="1"/>
<dbReference type="EMBL" id="AP009240">
    <property type="protein sequence ID" value="BAG75690.1"/>
    <property type="molecule type" value="Genomic_DNA"/>
</dbReference>
<dbReference type="RefSeq" id="WP_001094571.1">
    <property type="nucleotide sequence ID" value="NC_011415.1"/>
</dbReference>
<dbReference type="SMR" id="B6HZE1"/>
<dbReference type="GeneID" id="75202020"/>
<dbReference type="KEGG" id="ecy:ECSE_0166"/>
<dbReference type="HOGENOM" id="CLU_012833_0_0_6"/>
<dbReference type="Proteomes" id="UP000008199">
    <property type="component" value="Chromosome"/>
</dbReference>
<dbReference type="GO" id="GO:0008773">
    <property type="term" value="F:[protein-PII] uridylyltransferase activity"/>
    <property type="evidence" value="ECO:0007669"/>
    <property type="project" value="UniProtKB-UniRule"/>
</dbReference>
<dbReference type="GO" id="GO:0008081">
    <property type="term" value="F:phosphoric diester hydrolase activity"/>
    <property type="evidence" value="ECO:0007669"/>
    <property type="project" value="UniProtKB-UniRule"/>
</dbReference>
<dbReference type="GO" id="GO:0006808">
    <property type="term" value="P:regulation of nitrogen utilization"/>
    <property type="evidence" value="ECO:0007669"/>
    <property type="project" value="UniProtKB-UniRule"/>
</dbReference>
<dbReference type="CDD" id="cd04899">
    <property type="entry name" value="ACT_ACR-UUR-like_2"/>
    <property type="match status" value="1"/>
</dbReference>
<dbReference type="CDD" id="cd04900">
    <property type="entry name" value="ACT_UUR-like_1"/>
    <property type="match status" value="1"/>
</dbReference>
<dbReference type="CDD" id="cd00077">
    <property type="entry name" value="HDc"/>
    <property type="match status" value="1"/>
</dbReference>
<dbReference type="CDD" id="cd05401">
    <property type="entry name" value="NT_GlnE_GlnD_like"/>
    <property type="match status" value="1"/>
</dbReference>
<dbReference type="FunFam" id="1.10.3210.10:FF:000005">
    <property type="entry name" value="Bifunctional uridylyltransferase/uridylyl-removing enzyme"/>
    <property type="match status" value="1"/>
</dbReference>
<dbReference type="Gene3D" id="1.10.3210.10">
    <property type="entry name" value="Hypothetical protein af1432"/>
    <property type="match status" value="1"/>
</dbReference>
<dbReference type="HAMAP" id="MF_00277">
    <property type="entry name" value="PII_uridylyl_transf"/>
    <property type="match status" value="1"/>
</dbReference>
<dbReference type="InterPro" id="IPR045865">
    <property type="entry name" value="ACT-like_dom_sf"/>
</dbReference>
<dbReference type="InterPro" id="IPR002912">
    <property type="entry name" value="ACT_dom"/>
</dbReference>
<dbReference type="InterPro" id="IPR003607">
    <property type="entry name" value="HD/PDEase_dom"/>
</dbReference>
<dbReference type="InterPro" id="IPR006674">
    <property type="entry name" value="HD_domain"/>
</dbReference>
<dbReference type="InterPro" id="IPR043519">
    <property type="entry name" value="NT_sf"/>
</dbReference>
<dbReference type="InterPro" id="IPR013546">
    <property type="entry name" value="PII_UdlTrfase/GS_AdlTrfase"/>
</dbReference>
<dbReference type="InterPro" id="IPR002934">
    <property type="entry name" value="Polymerase_NTP_transf_dom"/>
</dbReference>
<dbReference type="InterPro" id="IPR010043">
    <property type="entry name" value="UTase/UR"/>
</dbReference>
<dbReference type="NCBIfam" id="NF002487">
    <property type="entry name" value="PRK01759.1"/>
    <property type="match status" value="1"/>
</dbReference>
<dbReference type="NCBIfam" id="NF003448">
    <property type="entry name" value="PRK05007.1"/>
    <property type="match status" value="1"/>
</dbReference>
<dbReference type="NCBIfam" id="TIGR01693">
    <property type="entry name" value="UTase_glnD"/>
    <property type="match status" value="1"/>
</dbReference>
<dbReference type="PANTHER" id="PTHR47320">
    <property type="entry name" value="BIFUNCTIONAL URIDYLYLTRANSFERASE/URIDYLYL-REMOVING ENZYME"/>
    <property type="match status" value="1"/>
</dbReference>
<dbReference type="PANTHER" id="PTHR47320:SF1">
    <property type="entry name" value="BIFUNCTIONAL URIDYLYLTRANSFERASE_URIDYLYL-REMOVING ENZYME"/>
    <property type="match status" value="1"/>
</dbReference>
<dbReference type="Pfam" id="PF01842">
    <property type="entry name" value="ACT"/>
    <property type="match status" value="2"/>
</dbReference>
<dbReference type="Pfam" id="PF08335">
    <property type="entry name" value="GlnD_UR_UTase"/>
    <property type="match status" value="1"/>
</dbReference>
<dbReference type="Pfam" id="PF01966">
    <property type="entry name" value="HD"/>
    <property type="match status" value="1"/>
</dbReference>
<dbReference type="Pfam" id="PF01909">
    <property type="entry name" value="NTP_transf_2"/>
    <property type="match status" value="1"/>
</dbReference>
<dbReference type="PIRSF" id="PIRSF006288">
    <property type="entry name" value="PII_uridyltransf"/>
    <property type="match status" value="1"/>
</dbReference>
<dbReference type="SMART" id="SM00471">
    <property type="entry name" value="HDc"/>
    <property type="match status" value="1"/>
</dbReference>
<dbReference type="SUPFAM" id="SSF55021">
    <property type="entry name" value="ACT-like"/>
    <property type="match status" value="2"/>
</dbReference>
<dbReference type="SUPFAM" id="SSF109604">
    <property type="entry name" value="HD-domain/PDEase-like"/>
    <property type="match status" value="1"/>
</dbReference>
<dbReference type="SUPFAM" id="SSF81301">
    <property type="entry name" value="Nucleotidyltransferase"/>
    <property type="match status" value="1"/>
</dbReference>
<dbReference type="SUPFAM" id="SSF81593">
    <property type="entry name" value="Nucleotidyltransferase substrate binding subunit/domain"/>
    <property type="match status" value="1"/>
</dbReference>
<dbReference type="PROSITE" id="PS51671">
    <property type="entry name" value="ACT"/>
    <property type="match status" value="2"/>
</dbReference>
<dbReference type="PROSITE" id="PS51831">
    <property type="entry name" value="HD"/>
    <property type="match status" value="1"/>
</dbReference>